<proteinExistence type="inferred from homology"/>
<sequence>MPSNSKRSMAPPTNVSKQISATSTSKKAPTKPTTQNSIAGAKSTGSPETRTSSPEHMESPETPTATTTVNRKKQKRRQKQAARLAAERQSSNMPAQNGDGGHDIVADFSRAATQGQHAAFDNDDLDYTDDETHYSTQGQRGLQHDKNGVLHQSQEPSKRKGKKKKNRKSRSQSHQAEGSSTSMSTPSASLARPVTLPPLSSSAYRSAHKVTKDRIWNTSTHEERERIKEFWLQLGEEERRSLVKVEKEAVLRKMKEQQKHSCSCTVCGRKRTAIEEELEVLYDAYYEELEQYANHKQGSFENGAPIGAPPRLYQPPLRTLDRHSHHPVAQHPSRGRVQELPDDDEDLDDDYDEDDEDDEPYSEDELEDAARTTRADFFAFGNSLTVKDGILTVADDLLKNDGKHFIDMMEQLAERRMQREEDTQYAAASAAHQSMHAGHNHGPPLDEEEYDDEEEEDYDSQDDEEYEEDEMDAMTEEQRMEEGRRMFQIFAARMFEQRVLTAYREKIARERQERLIEELEEENRLDVEREAKKAREAQKRKDKKKLQKQAKEEERAKREAERAAEEAAQKALEEKRLEEQRRKKEEQRKKREAEKKAQEEERQRKEAERQKRLKEERERQAEFERKQREQKEREKKKREEAKKREREEKEAKERELREKKIKEERERREREEKARQEKEAAAKAERESREKAKREEQAAQQAAAQAAAVQAAKRASQSGPTHLPPGLQHPQGPSALQSPHFQVATPVVPKAPTPIRPRQPSQQGSHASSPRSQPAHVDISQTSSLSPGSVSTTIPGKGVSQAPLLHHPQPSAPLSPLGGVGRGSHTLGFSPMQSLNGLPTNPGTIPAMGPRMPMAHDMSMYTNHSGPLGGQYRGFASPDSIPLPPGITGPRHLGQGRGFQMEVGHTSLPFHPQPNAAGPISAAAPQSSQNSGASLTHTRQPSISFERNQHETQPQSQPISRPAPIQRPASTVPHDQHKDESKTNQQEIDELSTQLGSSALLDDSDIPLTAPPSQPLSSALPPGLPGAGRIGFAGPSLFSDHLGSSKPHFSLGAPGSGAGWAHNPFGSPGFPAAPSWGPSSGAGWPTNAFGILGGSHRAHTSRPVAIRLSVIQACKQLNTTSGTDSSGYHNVNQILRQVEQLNSPNESQIGLDEMLDICDTEGNPQNGGGSFIIKNEGPKGTFVKFEPDNNSISSSTRGSVVPGDIGSPVPGSSLPTPGSGSRQFATTNISPTTGF</sequence>
<accession>Q1E1H4</accession>
<accession>A0A0D6K9P3</accession>
<accession>J3KBZ8</accession>
<feature type="chain" id="PRO_0000324447" description="Stress response protein NST1">
    <location>
        <begin position="1"/>
        <end position="1235"/>
    </location>
</feature>
<feature type="region of interest" description="Disordered" evidence="3">
    <location>
        <begin position="1"/>
        <end position="210"/>
    </location>
</feature>
<feature type="region of interest" description="Disordered" evidence="3">
    <location>
        <begin position="300"/>
        <end position="369"/>
    </location>
</feature>
<feature type="region of interest" description="Disordered" evidence="3">
    <location>
        <begin position="416"/>
        <end position="480"/>
    </location>
</feature>
<feature type="region of interest" description="Disordered" evidence="3">
    <location>
        <begin position="517"/>
        <end position="848"/>
    </location>
</feature>
<feature type="region of interest" description="Disordered" evidence="3">
    <location>
        <begin position="904"/>
        <end position="987"/>
    </location>
</feature>
<feature type="region of interest" description="Disordered" evidence="3">
    <location>
        <begin position="1001"/>
        <end position="1023"/>
    </location>
</feature>
<feature type="region of interest" description="Disordered" evidence="3">
    <location>
        <begin position="1186"/>
        <end position="1235"/>
    </location>
</feature>
<feature type="coiled-coil region" evidence="2">
    <location>
        <begin position="502"/>
        <end position="714"/>
    </location>
</feature>
<feature type="compositionally biased region" description="Polar residues" evidence="3">
    <location>
        <begin position="1"/>
        <end position="19"/>
    </location>
</feature>
<feature type="compositionally biased region" description="Low complexity" evidence="3">
    <location>
        <begin position="20"/>
        <end position="34"/>
    </location>
</feature>
<feature type="compositionally biased region" description="Polar residues" evidence="3">
    <location>
        <begin position="35"/>
        <end position="52"/>
    </location>
</feature>
<feature type="compositionally biased region" description="Basic residues" evidence="3">
    <location>
        <begin position="70"/>
        <end position="80"/>
    </location>
</feature>
<feature type="compositionally biased region" description="Basic residues" evidence="3">
    <location>
        <begin position="159"/>
        <end position="171"/>
    </location>
</feature>
<feature type="compositionally biased region" description="Low complexity" evidence="3">
    <location>
        <begin position="179"/>
        <end position="189"/>
    </location>
</feature>
<feature type="compositionally biased region" description="Acidic residues" evidence="3">
    <location>
        <begin position="340"/>
        <end position="367"/>
    </location>
</feature>
<feature type="compositionally biased region" description="Low complexity" evidence="3">
    <location>
        <begin position="426"/>
        <end position="437"/>
    </location>
</feature>
<feature type="compositionally biased region" description="Acidic residues" evidence="3">
    <location>
        <begin position="445"/>
        <end position="475"/>
    </location>
</feature>
<feature type="compositionally biased region" description="Basic and acidic residues" evidence="3">
    <location>
        <begin position="517"/>
        <end position="539"/>
    </location>
</feature>
<feature type="compositionally biased region" description="Basic and acidic residues" evidence="3">
    <location>
        <begin position="549"/>
        <end position="697"/>
    </location>
</feature>
<feature type="compositionally biased region" description="Low complexity" evidence="3">
    <location>
        <begin position="698"/>
        <end position="715"/>
    </location>
</feature>
<feature type="compositionally biased region" description="Polar residues" evidence="3">
    <location>
        <begin position="759"/>
        <end position="772"/>
    </location>
</feature>
<feature type="compositionally biased region" description="Polar residues" evidence="3">
    <location>
        <begin position="779"/>
        <end position="794"/>
    </location>
</feature>
<feature type="compositionally biased region" description="Polar residues" evidence="3">
    <location>
        <begin position="831"/>
        <end position="843"/>
    </location>
</feature>
<feature type="compositionally biased region" description="Polar residues" evidence="3">
    <location>
        <begin position="924"/>
        <end position="959"/>
    </location>
</feature>
<feature type="compositionally biased region" description="Polar residues" evidence="3">
    <location>
        <begin position="1188"/>
        <end position="1198"/>
    </location>
</feature>
<feature type="compositionally biased region" description="Low complexity" evidence="3">
    <location>
        <begin position="1206"/>
        <end position="1221"/>
    </location>
</feature>
<feature type="compositionally biased region" description="Polar residues" evidence="3">
    <location>
        <begin position="1222"/>
        <end position="1235"/>
    </location>
</feature>
<comment type="function">
    <text evidence="1">May act as a negative regulator of salt tolerance.</text>
</comment>
<comment type="subcellular location">
    <subcellularLocation>
        <location evidence="1">Cytoplasm</location>
    </subcellularLocation>
</comment>
<comment type="similarity">
    <text evidence="4">Belongs to the NST1 family.</text>
</comment>
<evidence type="ECO:0000250" key="1"/>
<evidence type="ECO:0000255" key="2"/>
<evidence type="ECO:0000256" key="3">
    <source>
        <dbReference type="SAM" id="MobiDB-lite"/>
    </source>
</evidence>
<evidence type="ECO:0000305" key="4"/>
<dbReference type="EMBL" id="GG704916">
    <property type="protein sequence ID" value="EAS32565.2"/>
    <property type="molecule type" value="Genomic_DNA"/>
</dbReference>
<dbReference type="RefSeq" id="XP_001244148.2">
    <property type="nucleotide sequence ID" value="XM_001244147.2"/>
</dbReference>
<dbReference type="SMR" id="Q1E1H4"/>
<dbReference type="STRING" id="246410.Q1E1H4"/>
<dbReference type="GeneID" id="4563211"/>
<dbReference type="KEGG" id="cim:CIMG_03589"/>
<dbReference type="VEuPathDB" id="FungiDB:CIMG_03589"/>
<dbReference type="InParanoid" id="Q1E1H4"/>
<dbReference type="OMA" id="EEDTQYG"/>
<dbReference type="OrthoDB" id="21629at2759"/>
<dbReference type="Proteomes" id="UP000001261">
    <property type="component" value="Unassembled WGS sequence"/>
</dbReference>
<dbReference type="GO" id="GO:0005737">
    <property type="term" value="C:cytoplasm"/>
    <property type="evidence" value="ECO:0007669"/>
    <property type="project" value="UniProtKB-SubCell"/>
</dbReference>
<dbReference type="InterPro" id="IPR051195">
    <property type="entry name" value="Fungal_stress_NST1"/>
</dbReference>
<dbReference type="InterPro" id="IPR025279">
    <property type="entry name" value="NST1"/>
</dbReference>
<dbReference type="PANTHER" id="PTHR31780:SF10">
    <property type="entry name" value="LD36051P"/>
    <property type="match status" value="1"/>
</dbReference>
<dbReference type="PANTHER" id="PTHR31780">
    <property type="entry name" value="STRESS RESPONSE PROTEIN NST1-RELATED"/>
    <property type="match status" value="1"/>
</dbReference>
<dbReference type="Pfam" id="PF13945">
    <property type="entry name" value="NST1"/>
    <property type="match status" value="1"/>
</dbReference>
<gene>
    <name type="primary">NST1</name>
    <name type="ORF">CIMG_03589</name>
</gene>
<name>NST1_COCIM</name>
<protein>
    <recommendedName>
        <fullName>Stress response protein NST1</fullName>
    </recommendedName>
</protein>
<keyword id="KW-0175">Coiled coil</keyword>
<keyword id="KW-0963">Cytoplasm</keyword>
<keyword id="KW-1185">Reference proteome</keyword>
<keyword id="KW-0346">Stress response</keyword>
<organism>
    <name type="scientific">Coccidioides immitis (strain RS)</name>
    <name type="common">Valley fever fungus</name>
    <dbReference type="NCBI Taxonomy" id="246410"/>
    <lineage>
        <taxon>Eukaryota</taxon>
        <taxon>Fungi</taxon>
        <taxon>Dikarya</taxon>
        <taxon>Ascomycota</taxon>
        <taxon>Pezizomycotina</taxon>
        <taxon>Eurotiomycetes</taxon>
        <taxon>Eurotiomycetidae</taxon>
        <taxon>Onygenales</taxon>
        <taxon>Onygenaceae</taxon>
        <taxon>Coccidioides</taxon>
    </lineage>
</organism>
<reference key="1">
    <citation type="journal article" date="2009" name="Genome Res.">
        <title>Comparative genomic analyses of the human fungal pathogens Coccidioides and their relatives.</title>
        <authorList>
            <person name="Sharpton T.J."/>
            <person name="Stajich J.E."/>
            <person name="Rounsley S.D."/>
            <person name="Gardner M.J."/>
            <person name="Wortman J.R."/>
            <person name="Jordar V.S."/>
            <person name="Maiti R."/>
            <person name="Kodira C.D."/>
            <person name="Neafsey D.E."/>
            <person name="Zeng Q."/>
            <person name="Hung C.-Y."/>
            <person name="McMahan C."/>
            <person name="Muszewska A."/>
            <person name="Grynberg M."/>
            <person name="Mandel M.A."/>
            <person name="Kellner E.M."/>
            <person name="Barker B.M."/>
            <person name="Galgiani J.N."/>
            <person name="Orbach M.J."/>
            <person name="Kirkland T.N."/>
            <person name="Cole G.T."/>
            <person name="Henn M.R."/>
            <person name="Birren B.W."/>
            <person name="Taylor J.W."/>
        </authorList>
    </citation>
    <scope>NUCLEOTIDE SEQUENCE [LARGE SCALE GENOMIC DNA]</scope>
    <source>
        <strain>RS</strain>
    </source>
</reference>
<reference key="2">
    <citation type="journal article" date="2010" name="Genome Res.">
        <title>Population genomic sequencing of Coccidioides fungi reveals recent hybridization and transposon control.</title>
        <authorList>
            <person name="Neafsey D.E."/>
            <person name="Barker B.M."/>
            <person name="Sharpton T.J."/>
            <person name="Stajich J.E."/>
            <person name="Park D.J."/>
            <person name="Whiston E."/>
            <person name="Hung C.-Y."/>
            <person name="McMahan C."/>
            <person name="White J."/>
            <person name="Sykes S."/>
            <person name="Heiman D."/>
            <person name="Young S."/>
            <person name="Zeng Q."/>
            <person name="Abouelleil A."/>
            <person name="Aftuck L."/>
            <person name="Bessette D."/>
            <person name="Brown A."/>
            <person name="FitzGerald M."/>
            <person name="Lui A."/>
            <person name="Macdonald J.P."/>
            <person name="Priest M."/>
            <person name="Orbach M.J."/>
            <person name="Galgiani J.N."/>
            <person name="Kirkland T.N."/>
            <person name="Cole G.T."/>
            <person name="Birren B.W."/>
            <person name="Henn M.R."/>
            <person name="Taylor J.W."/>
            <person name="Rounsley S.D."/>
        </authorList>
    </citation>
    <scope>GENOME REANNOTATION</scope>
    <source>
        <strain>RS</strain>
    </source>
</reference>